<reference key="1">
    <citation type="journal article" date="1991" name="FEBS Lett.">
        <title>Extensive multiplicity of the miscellaneous type of neurotoxins from the venom of the cobra Naja naja naja and structural characterization of major components.</title>
        <authorList>
            <person name="Shafqat J."/>
            <person name="Siddiqi A.R."/>
            <person name="Zaidi Z.H."/>
            <person name="Joernvall H."/>
        </authorList>
    </citation>
    <scope>PROTEIN SEQUENCE</scope>
    <scope>SUBCELLULAR LOCATION</scope>
    <source>
        <tissue>Venom</tissue>
    </source>
</reference>
<organism>
    <name type="scientific">Naja naja</name>
    <name type="common">Indian cobra</name>
    <dbReference type="NCBI Taxonomy" id="35670"/>
    <lineage>
        <taxon>Eukaryota</taxon>
        <taxon>Metazoa</taxon>
        <taxon>Chordata</taxon>
        <taxon>Craniata</taxon>
        <taxon>Vertebrata</taxon>
        <taxon>Euteleostomi</taxon>
        <taxon>Lepidosauria</taxon>
        <taxon>Squamata</taxon>
        <taxon>Bifurcata</taxon>
        <taxon>Unidentata</taxon>
        <taxon>Episquamata</taxon>
        <taxon>Toxicofera</taxon>
        <taxon>Serpentes</taxon>
        <taxon>Colubroidea</taxon>
        <taxon>Elapidae</taxon>
        <taxon>Elapinae</taxon>
        <taxon>Naja</taxon>
    </lineage>
</organism>
<sequence length="65" mass="7637">LTCLNCPEVYCRRFQICRDGEKICFKKFDQRNLLGKRYRRGCAATCPEAKPREIVQCCSTDKCNR</sequence>
<name>3NO27_NAJNA</name>
<protein>
    <recommendedName>
        <fullName evidence="5">Weak neurotoxin 7</fullName>
    </recommendedName>
</protein>
<feature type="chain" id="PRO_0000093639" description="Weak neurotoxin 7" evidence="3">
    <location>
        <begin position="1"/>
        <end position="65"/>
    </location>
</feature>
<feature type="disulfide bond" evidence="2">
    <location>
        <begin position="3"/>
        <end position="24"/>
    </location>
</feature>
<feature type="disulfide bond" evidence="2">
    <location>
        <begin position="6"/>
        <end position="11"/>
    </location>
</feature>
<feature type="disulfide bond" evidence="2">
    <location>
        <begin position="17"/>
        <end position="42"/>
    </location>
</feature>
<feature type="disulfide bond" evidence="2">
    <location>
        <begin position="46"/>
        <end position="57"/>
    </location>
</feature>
<feature type="disulfide bond" evidence="2">
    <location>
        <begin position="58"/>
        <end position="63"/>
    </location>
</feature>
<dbReference type="PIR" id="S16020">
    <property type="entry name" value="S16020"/>
</dbReference>
<dbReference type="SMR" id="P29181"/>
<dbReference type="Proteomes" id="UP000694559">
    <property type="component" value="Unplaced"/>
</dbReference>
<dbReference type="GO" id="GO:0005576">
    <property type="term" value="C:extracellular region"/>
    <property type="evidence" value="ECO:0007669"/>
    <property type="project" value="UniProtKB-SubCell"/>
</dbReference>
<dbReference type="GO" id="GO:0090729">
    <property type="term" value="F:toxin activity"/>
    <property type="evidence" value="ECO:0007669"/>
    <property type="project" value="UniProtKB-KW"/>
</dbReference>
<dbReference type="CDD" id="cd00206">
    <property type="entry name" value="TFP_snake_toxin"/>
    <property type="match status" value="1"/>
</dbReference>
<dbReference type="FunFam" id="2.10.60.10:FF:000024">
    <property type="entry name" value="Cytotoxin 1"/>
    <property type="match status" value="1"/>
</dbReference>
<dbReference type="Gene3D" id="2.10.60.10">
    <property type="entry name" value="CD59"/>
    <property type="match status" value="1"/>
</dbReference>
<dbReference type="InterPro" id="IPR003571">
    <property type="entry name" value="Snake_3FTx"/>
</dbReference>
<dbReference type="InterPro" id="IPR045860">
    <property type="entry name" value="Snake_toxin-like_sf"/>
</dbReference>
<dbReference type="InterPro" id="IPR018354">
    <property type="entry name" value="Snake_toxin_con_site"/>
</dbReference>
<dbReference type="InterPro" id="IPR054131">
    <property type="entry name" value="Toxin_cobra-type"/>
</dbReference>
<dbReference type="Pfam" id="PF21947">
    <property type="entry name" value="Toxin_cobra-type"/>
    <property type="match status" value="1"/>
</dbReference>
<dbReference type="SUPFAM" id="SSF57302">
    <property type="entry name" value="Snake toxin-like"/>
    <property type="match status" value="1"/>
</dbReference>
<dbReference type="PROSITE" id="PS00272">
    <property type="entry name" value="SNAKE_TOXIN"/>
    <property type="match status" value="1"/>
</dbReference>
<evidence type="ECO:0000250" key="1">
    <source>
        <dbReference type="UniProtKB" id="O42255"/>
    </source>
</evidence>
<evidence type="ECO:0000250" key="2">
    <source>
        <dbReference type="UniProtKB" id="Q8AY51"/>
    </source>
</evidence>
<evidence type="ECO:0000269" key="3">
    <source>
    </source>
</evidence>
<evidence type="ECO:0000305" key="4"/>
<evidence type="ECO:0000305" key="5">
    <source>
    </source>
</evidence>
<accession>P29181</accession>
<comment type="function">
    <text evidence="1">Binds with low affinity to muscular (alpha-1-beta-1-delta-epsilon/CHRNA1-CHRNB1-CHRND-CHRNE) and very low affinity to neuronal (alpha-7/CHRNA7) nicotinic acetylcholine receptor (nAChR).</text>
</comment>
<comment type="subcellular location">
    <subcellularLocation>
        <location evidence="3">Secreted</location>
    </subcellularLocation>
</comment>
<comment type="tissue specificity">
    <text evidence="5">Expressed by the venom gland.</text>
</comment>
<comment type="similarity">
    <text evidence="4">Belongs to the three-finger toxin family. Ancestral subfamily. Orphan group II sub-subfamily.</text>
</comment>
<proteinExistence type="evidence at protein level"/>
<keyword id="KW-0903">Direct protein sequencing</keyword>
<keyword id="KW-1015">Disulfide bond</keyword>
<keyword id="KW-1185">Reference proteome</keyword>
<keyword id="KW-0964">Secreted</keyword>
<keyword id="KW-0800">Toxin</keyword>